<evidence type="ECO:0000255" key="1">
    <source>
        <dbReference type="HAMAP-Rule" id="MF_00028"/>
    </source>
</evidence>
<keyword id="KW-0169">Cobalamin biosynthesis</keyword>
<keyword id="KW-0315">Glutamine amidotransferase</keyword>
<protein>
    <recommendedName>
        <fullName evidence="1">Cobyric acid synthase</fullName>
    </recommendedName>
</protein>
<proteinExistence type="inferred from homology"/>
<reference key="1">
    <citation type="journal article" date="2008" name="Genome Res.">
        <title>Comparative genome analysis of Salmonella enteritidis PT4 and Salmonella gallinarum 287/91 provides insights into evolutionary and host adaptation pathways.</title>
        <authorList>
            <person name="Thomson N.R."/>
            <person name="Clayton D.J."/>
            <person name="Windhorst D."/>
            <person name="Vernikos G."/>
            <person name="Davidson S."/>
            <person name="Churcher C."/>
            <person name="Quail M.A."/>
            <person name="Stevens M."/>
            <person name="Jones M.A."/>
            <person name="Watson M."/>
            <person name="Barron A."/>
            <person name="Layton A."/>
            <person name="Pickard D."/>
            <person name="Kingsley R.A."/>
            <person name="Bignell A."/>
            <person name="Clark L."/>
            <person name="Harris B."/>
            <person name="Ormond D."/>
            <person name="Abdellah Z."/>
            <person name="Brooks K."/>
            <person name="Cherevach I."/>
            <person name="Chillingworth T."/>
            <person name="Woodward J."/>
            <person name="Norberczak H."/>
            <person name="Lord A."/>
            <person name="Arrowsmith C."/>
            <person name="Jagels K."/>
            <person name="Moule S."/>
            <person name="Mungall K."/>
            <person name="Saunders M."/>
            <person name="Whitehead S."/>
            <person name="Chabalgoity J.A."/>
            <person name="Maskell D."/>
            <person name="Humphreys T."/>
            <person name="Roberts M."/>
            <person name="Barrow P.A."/>
            <person name="Dougan G."/>
            <person name="Parkhill J."/>
        </authorList>
    </citation>
    <scope>NUCLEOTIDE SEQUENCE [LARGE SCALE GENOMIC DNA]</scope>
    <source>
        <strain>287/91 / NCTC 13346</strain>
    </source>
</reference>
<comment type="function">
    <text evidence="1">Catalyzes amidations at positions B, D, E, and G on adenosylcobyrinic A,C-diamide. NH(2) groups are provided by glutamine, and one molecule of ATP is hydrogenolyzed for each amidation.</text>
</comment>
<comment type="pathway">
    <text evidence="1">Cofactor biosynthesis; adenosylcobalamin biosynthesis.</text>
</comment>
<comment type="similarity">
    <text evidence="1">Belongs to the CobB/CobQ family. CobQ subfamily.</text>
</comment>
<sequence>MTQAVMLQGTASDVGKSVLAAGLCRIFYQDGLRTAPFKSQNMALNSGITSDGKEMGRAQIFQAEAAGITPDVRMNPVLLKPTSDRQAQVVLMGKVATNMDAVSYHDYKPRLREQILAVYNSLAQEYDVIVLEGAGSPAEINLRDRDIVNMGMAEMAQCPVILVADIDRGGVFAAIYGTLALLHKQERDRVKGVIINKFRGDVALLYSGIEQIESLTGVPVLGVMPWLDVDLEDEDGVALQNDKYRGNAPRDITIAIVQLPHISNFTDFNALAAQPDVRIRYIRRPEALTDADLVILPGSKNTLSDLAWLRESGMADALLQTHRQGVPVMGICGGYQMLGDTIVDEVESGLGTQPGLGLLNTITRFAQDKITTQVNATMSGELPSWLAAAAGLPVRGYEIHMGETVLQEGCCTAMTLQRNGCSVADGAVTADGLAFGTYLHGLFDSDAFTRAVVNGLRARKGLAPWETTFCYAEHKVRQFDLLAEAMRQHIDKIYTIMQQHQEPV</sequence>
<gene>
    <name evidence="1" type="primary">cobQ</name>
    <name type="ordered locus">SG2043</name>
</gene>
<organism>
    <name type="scientific">Salmonella gallinarum (strain 287/91 / NCTC 13346)</name>
    <dbReference type="NCBI Taxonomy" id="550538"/>
    <lineage>
        <taxon>Bacteria</taxon>
        <taxon>Pseudomonadati</taxon>
        <taxon>Pseudomonadota</taxon>
        <taxon>Gammaproteobacteria</taxon>
        <taxon>Enterobacterales</taxon>
        <taxon>Enterobacteriaceae</taxon>
        <taxon>Salmonella</taxon>
    </lineage>
</organism>
<accession>B5RBK9</accession>
<name>COBQ_SALG2</name>
<dbReference type="EMBL" id="AM933173">
    <property type="protein sequence ID" value="CAR37890.1"/>
    <property type="molecule type" value="Genomic_DNA"/>
</dbReference>
<dbReference type="RefSeq" id="WP_000189668.1">
    <property type="nucleotide sequence ID" value="NC_011274.1"/>
</dbReference>
<dbReference type="KEGG" id="seg:SG2043"/>
<dbReference type="HOGENOM" id="CLU_019250_2_2_6"/>
<dbReference type="UniPathway" id="UPA00148"/>
<dbReference type="Proteomes" id="UP000008321">
    <property type="component" value="Chromosome"/>
</dbReference>
<dbReference type="GO" id="GO:0015420">
    <property type="term" value="F:ABC-type vitamin B12 transporter activity"/>
    <property type="evidence" value="ECO:0007669"/>
    <property type="project" value="UniProtKB-UniRule"/>
</dbReference>
<dbReference type="GO" id="GO:0003824">
    <property type="term" value="F:catalytic activity"/>
    <property type="evidence" value="ECO:0007669"/>
    <property type="project" value="InterPro"/>
</dbReference>
<dbReference type="GO" id="GO:0009236">
    <property type="term" value="P:cobalamin biosynthetic process"/>
    <property type="evidence" value="ECO:0007669"/>
    <property type="project" value="UniProtKB-UniRule"/>
</dbReference>
<dbReference type="CDD" id="cd05389">
    <property type="entry name" value="CobQ_N"/>
    <property type="match status" value="1"/>
</dbReference>
<dbReference type="CDD" id="cd01750">
    <property type="entry name" value="GATase1_CobQ"/>
    <property type="match status" value="1"/>
</dbReference>
<dbReference type="Gene3D" id="3.40.50.880">
    <property type="match status" value="1"/>
</dbReference>
<dbReference type="Gene3D" id="3.40.50.300">
    <property type="entry name" value="P-loop containing nucleotide triphosphate hydrolases"/>
    <property type="match status" value="1"/>
</dbReference>
<dbReference type="HAMAP" id="MF_00028">
    <property type="entry name" value="CobQ"/>
    <property type="match status" value="1"/>
</dbReference>
<dbReference type="InterPro" id="IPR029062">
    <property type="entry name" value="Class_I_gatase-like"/>
</dbReference>
<dbReference type="InterPro" id="IPR002586">
    <property type="entry name" value="CobQ/CobB/MinD/ParA_Nub-bd_dom"/>
</dbReference>
<dbReference type="InterPro" id="IPR033949">
    <property type="entry name" value="CobQ_GATase1"/>
</dbReference>
<dbReference type="InterPro" id="IPR047045">
    <property type="entry name" value="CobQ_N"/>
</dbReference>
<dbReference type="InterPro" id="IPR004459">
    <property type="entry name" value="CobQ_synth"/>
</dbReference>
<dbReference type="InterPro" id="IPR011698">
    <property type="entry name" value="GATase_3"/>
</dbReference>
<dbReference type="InterPro" id="IPR027417">
    <property type="entry name" value="P-loop_NTPase"/>
</dbReference>
<dbReference type="NCBIfam" id="TIGR00313">
    <property type="entry name" value="cobQ"/>
    <property type="match status" value="1"/>
</dbReference>
<dbReference type="NCBIfam" id="NF001989">
    <property type="entry name" value="PRK00784.1"/>
    <property type="match status" value="1"/>
</dbReference>
<dbReference type="PANTHER" id="PTHR21343:SF1">
    <property type="entry name" value="COBYRIC ACID SYNTHASE"/>
    <property type="match status" value="1"/>
</dbReference>
<dbReference type="PANTHER" id="PTHR21343">
    <property type="entry name" value="DETHIOBIOTIN SYNTHETASE"/>
    <property type="match status" value="1"/>
</dbReference>
<dbReference type="Pfam" id="PF01656">
    <property type="entry name" value="CbiA"/>
    <property type="match status" value="1"/>
</dbReference>
<dbReference type="Pfam" id="PF07685">
    <property type="entry name" value="GATase_3"/>
    <property type="match status" value="1"/>
</dbReference>
<dbReference type="SUPFAM" id="SSF52317">
    <property type="entry name" value="Class I glutamine amidotransferase-like"/>
    <property type="match status" value="1"/>
</dbReference>
<dbReference type="SUPFAM" id="SSF52540">
    <property type="entry name" value="P-loop containing nucleoside triphosphate hydrolases"/>
    <property type="match status" value="1"/>
</dbReference>
<dbReference type="PROSITE" id="PS51274">
    <property type="entry name" value="GATASE_COBBQ"/>
    <property type="match status" value="1"/>
</dbReference>
<feature type="chain" id="PRO_1000090246" description="Cobyric acid synthase">
    <location>
        <begin position="1"/>
        <end position="504"/>
    </location>
</feature>
<feature type="domain" description="GATase cobBQ-type" evidence="1">
    <location>
        <begin position="251"/>
        <end position="448"/>
    </location>
</feature>
<feature type="active site" description="Nucleophile" evidence="1">
    <location>
        <position position="332"/>
    </location>
</feature>
<feature type="active site" evidence="1">
    <location>
        <position position="440"/>
    </location>
</feature>